<organism>
    <name type="scientific">Clostridium botulinum (strain Langeland / NCTC 10281 / Type F)</name>
    <dbReference type="NCBI Taxonomy" id="441772"/>
    <lineage>
        <taxon>Bacteria</taxon>
        <taxon>Bacillati</taxon>
        <taxon>Bacillota</taxon>
        <taxon>Clostridia</taxon>
        <taxon>Eubacteriales</taxon>
        <taxon>Clostridiaceae</taxon>
        <taxon>Clostridium</taxon>
    </lineage>
</organism>
<name>RS5_CLOBL</name>
<comment type="function">
    <text evidence="1">With S4 and S12 plays an important role in translational accuracy.</text>
</comment>
<comment type="function">
    <text evidence="1">Located at the back of the 30S subunit body where it stabilizes the conformation of the head with respect to the body.</text>
</comment>
<comment type="subunit">
    <text evidence="1">Part of the 30S ribosomal subunit. Contacts proteins S4 and S8.</text>
</comment>
<comment type="domain">
    <text>The N-terminal domain interacts with the head of the 30S subunit; the C-terminal domain interacts with the body and contacts protein S4. The interaction surface between S4 and S5 is involved in control of translational fidelity.</text>
</comment>
<comment type="similarity">
    <text evidence="1">Belongs to the universal ribosomal protein uS5 family.</text>
</comment>
<accession>A7GJ57</accession>
<reference key="1">
    <citation type="submission" date="2007-06" db="EMBL/GenBank/DDBJ databases">
        <authorList>
            <person name="Brinkac L.M."/>
            <person name="Daugherty S."/>
            <person name="Dodson R.J."/>
            <person name="Madupu R."/>
            <person name="Brown J.L."/>
            <person name="Bruce D."/>
            <person name="Detter C."/>
            <person name="Munk C."/>
            <person name="Smith L.A."/>
            <person name="Smith T.J."/>
            <person name="White O."/>
            <person name="Brettin T.S."/>
        </authorList>
    </citation>
    <scope>NUCLEOTIDE SEQUENCE [LARGE SCALE GENOMIC DNA]</scope>
    <source>
        <strain>Langeland / NCTC 10281 / Type F</strain>
    </source>
</reference>
<keyword id="KW-0687">Ribonucleoprotein</keyword>
<keyword id="KW-0689">Ribosomal protein</keyword>
<keyword id="KW-0694">RNA-binding</keyword>
<keyword id="KW-0699">rRNA-binding</keyword>
<proteinExistence type="inferred from homology"/>
<gene>
    <name evidence="1" type="primary">rpsE</name>
    <name type="ordered locus">CLI_3646</name>
</gene>
<sequence>MRIDPSTLNLKEKVVHINRVAKVVKGGRNFRFSVLVVVGDEAGHVGVGTGKSIEIPEAIRKAIEDAKKNIVEVKTVGTTVPHDIIGKFGKGEVLIMTAKEGTGVIAGGPVRAVLELAGLKDVRAKSKGSNNPTNMVNATIDGLARLRTVEDIAKLRGKTVEEILG</sequence>
<protein>
    <recommendedName>
        <fullName evidence="1">Small ribosomal subunit protein uS5</fullName>
    </recommendedName>
    <alternativeName>
        <fullName evidence="2">30S ribosomal protein S5</fullName>
    </alternativeName>
</protein>
<evidence type="ECO:0000255" key="1">
    <source>
        <dbReference type="HAMAP-Rule" id="MF_01307"/>
    </source>
</evidence>
<evidence type="ECO:0000305" key="2"/>
<dbReference type="EMBL" id="CP000728">
    <property type="protein sequence ID" value="ABS40357.1"/>
    <property type="molecule type" value="Genomic_DNA"/>
</dbReference>
<dbReference type="RefSeq" id="WP_003357254.1">
    <property type="nucleotide sequence ID" value="NC_009699.1"/>
</dbReference>
<dbReference type="SMR" id="A7GJ57"/>
<dbReference type="GeneID" id="5185823"/>
<dbReference type="KEGG" id="cbf:CLI_3646"/>
<dbReference type="HOGENOM" id="CLU_065898_2_2_9"/>
<dbReference type="Proteomes" id="UP000002410">
    <property type="component" value="Chromosome"/>
</dbReference>
<dbReference type="GO" id="GO:0015935">
    <property type="term" value="C:small ribosomal subunit"/>
    <property type="evidence" value="ECO:0007669"/>
    <property type="project" value="InterPro"/>
</dbReference>
<dbReference type="GO" id="GO:0019843">
    <property type="term" value="F:rRNA binding"/>
    <property type="evidence" value="ECO:0007669"/>
    <property type="project" value="UniProtKB-UniRule"/>
</dbReference>
<dbReference type="GO" id="GO:0003735">
    <property type="term" value="F:structural constituent of ribosome"/>
    <property type="evidence" value="ECO:0007669"/>
    <property type="project" value="InterPro"/>
</dbReference>
<dbReference type="GO" id="GO:0006412">
    <property type="term" value="P:translation"/>
    <property type="evidence" value="ECO:0007669"/>
    <property type="project" value="UniProtKB-UniRule"/>
</dbReference>
<dbReference type="FunFam" id="3.30.160.20:FF:000001">
    <property type="entry name" value="30S ribosomal protein S5"/>
    <property type="match status" value="1"/>
</dbReference>
<dbReference type="FunFam" id="3.30.230.10:FF:000002">
    <property type="entry name" value="30S ribosomal protein S5"/>
    <property type="match status" value="1"/>
</dbReference>
<dbReference type="Gene3D" id="3.30.160.20">
    <property type="match status" value="1"/>
</dbReference>
<dbReference type="Gene3D" id="3.30.230.10">
    <property type="match status" value="1"/>
</dbReference>
<dbReference type="HAMAP" id="MF_01307_B">
    <property type="entry name" value="Ribosomal_uS5_B"/>
    <property type="match status" value="1"/>
</dbReference>
<dbReference type="InterPro" id="IPR020568">
    <property type="entry name" value="Ribosomal_Su5_D2-typ_SF"/>
</dbReference>
<dbReference type="InterPro" id="IPR000851">
    <property type="entry name" value="Ribosomal_uS5"/>
</dbReference>
<dbReference type="InterPro" id="IPR005712">
    <property type="entry name" value="Ribosomal_uS5_bac-type"/>
</dbReference>
<dbReference type="InterPro" id="IPR005324">
    <property type="entry name" value="Ribosomal_uS5_C"/>
</dbReference>
<dbReference type="InterPro" id="IPR013810">
    <property type="entry name" value="Ribosomal_uS5_N"/>
</dbReference>
<dbReference type="InterPro" id="IPR018192">
    <property type="entry name" value="Ribosomal_uS5_N_CS"/>
</dbReference>
<dbReference type="InterPro" id="IPR014721">
    <property type="entry name" value="Ribsml_uS5_D2-typ_fold_subgr"/>
</dbReference>
<dbReference type="NCBIfam" id="TIGR01021">
    <property type="entry name" value="rpsE_bact"/>
    <property type="match status" value="1"/>
</dbReference>
<dbReference type="PANTHER" id="PTHR48277">
    <property type="entry name" value="MITOCHONDRIAL RIBOSOMAL PROTEIN S5"/>
    <property type="match status" value="1"/>
</dbReference>
<dbReference type="PANTHER" id="PTHR48277:SF1">
    <property type="entry name" value="MITOCHONDRIAL RIBOSOMAL PROTEIN S5"/>
    <property type="match status" value="1"/>
</dbReference>
<dbReference type="Pfam" id="PF00333">
    <property type="entry name" value="Ribosomal_S5"/>
    <property type="match status" value="1"/>
</dbReference>
<dbReference type="Pfam" id="PF03719">
    <property type="entry name" value="Ribosomal_S5_C"/>
    <property type="match status" value="1"/>
</dbReference>
<dbReference type="SUPFAM" id="SSF54768">
    <property type="entry name" value="dsRNA-binding domain-like"/>
    <property type="match status" value="1"/>
</dbReference>
<dbReference type="SUPFAM" id="SSF54211">
    <property type="entry name" value="Ribosomal protein S5 domain 2-like"/>
    <property type="match status" value="1"/>
</dbReference>
<dbReference type="PROSITE" id="PS00585">
    <property type="entry name" value="RIBOSOMAL_S5"/>
    <property type="match status" value="1"/>
</dbReference>
<dbReference type="PROSITE" id="PS50881">
    <property type="entry name" value="S5_DSRBD"/>
    <property type="match status" value="1"/>
</dbReference>
<feature type="chain" id="PRO_0000323109" description="Small ribosomal subunit protein uS5">
    <location>
        <begin position="1"/>
        <end position="165"/>
    </location>
</feature>
<feature type="domain" description="S5 DRBM" evidence="1">
    <location>
        <begin position="10"/>
        <end position="73"/>
    </location>
</feature>